<dbReference type="EC" id="2.5.1.61" evidence="1"/>
<dbReference type="EMBL" id="CP000086">
    <property type="protein sequence ID" value="ABC37987.1"/>
    <property type="molecule type" value="Genomic_DNA"/>
</dbReference>
<dbReference type="RefSeq" id="WP_009892462.1">
    <property type="nucleotide sequence ID" value="NZ_CP008785.1"/>
</dbReference>
<dbReference type="SMR" id="Q2T071"/>
<dbReference type="GeneID" id="45120627"/>
<dbReference type="KEGG" id="bte:BTH_I0872"/>
<dbReference type="HOGENOM" id="CLU_019704_0_2_4"/>
<dbReference type="UniPathway" id="UPA00251">
    <property type="reaction ID" value="UER00319"/>
</dbReference>
<dbReference type="Proteomes" id="UP000001930">
    <property type="component" value="Chromosome I"/>
</dbReference>
<dbReference type="GO" id="GO:0005737">
    <property type="term" value="C:cytoplasm"/>
    <property type="evidence" value="ECO:0007669"/>
    <property type="project" value="TreeGrafter"/>
</dbReference>
<dbReference type="GO" id="GO:0004418">
    <property type="term" value="F:hydroxymethylbilane synthase activity"/>
    <property type="evidence" value="ECO:0007669"/>
    <property type="project" value="UniProtKB-UniRule"/>
</dbReference>
<dbReference type="GO" id="GO:0006782">
    <property type="term" value="P:protoporphyrinogen IX biosynthetic process"/>
    <property type="evidence" value="ECO:0007669"/>
    <property type="project" value="UniProtKB-UniRule"/>
</dbReference>
<dbReference type="CDD" id="cd13646">
    <property type="entry name" value="PBP2_EcHMBS_like"/>
    <property type="match status" value="1"/>
</dbReference>
<dbReference type="FunFam" id="3.40.190.10:FF:000004">
    <property type="entry name" value="Porphobilinogen deaminase"/>
    <property type="match status" value="1"/>
</dbReference>
<dbReference type="FunFam" id="3.40.190.10:FF:000005">
    <property type="entry name" value="Porphobilinogen deaminase"/>
    <property type="match status" value="1"/>
</dbReference>
<dbReference type="Gene3D" id="3.40.190.10">
    <property type="entry name" value="Periplasmic binding protein-like II"/>
    <property type="match status" value="2"/>
</dbReference>
<dbReference type="Gene3D" id="3.30.160.40">
    <property type="entry name" value="Porphobilinogen deaminase, C-terminal domain"/>
    <property type="match status" value="1"/>
</dbReference>
<dbReference type="HAMAP" id="MF_00260">
    <property type="entry name" value="Porphobil_deam"/>
    <property type="match status" value="1"/>
</dbReference>
<dbReference type="InterPro" id="IPR000860">
    <property type="entry name" value="HemC"/>
</dbReference>
<dbReference type="InterPro" id="IPR022419">
    <property type="entry name" value="Porphobilin_deaminase_cofac_BS"/>
</dbReference>
<dbReference type="InterPro" id="IPR022417">
    <property type="entry name" value="Porphobilin_deaminase_N"/>
</dbReference>
<dbReference type="InterPro" id="IPR022418">
    <property type="entry name" value="Porphobilinogen_deaminase_C"/>
</dbReference>
<dbReference type="InterPro" id="IPR036803">
    <property type="entry name" value="Porphobilinogen_deaminase_C_sf"/>
</dbReference>
<dbReference type="NCBIfam" id="TIGR00212">
    <property type="entry name" value="hemC"/>
    <property type="match status" value="1"/>
</dbReference>
<dbReference type="PANTHER" id="PTHR11557">
    <property type="entry name" value="PORPHOBILINOGEN DEAMINASE"/>
    <property type="match status" value="1"/>
</dbReference>
<dbReference type="PANTHER" id="PTHR11557:SF0">
    <property type="entry name" value="PORPHOBILINOGEN DEAMINASE"/>
    <property type="match status" value="1"/>
</dbReference>
<dbReference type="Pfam" id="PF01379">
    <property type="entry name" value="Porphobil_deam"/>
    <property type="match status" value="1"/>
</dbReference>
<dbReference type="Pfam" id="PF03900">
    <property type="entry name" value="Porphobil_deamC"/>
    <property type="match status" value="1"/>
</dbReference>
<dbReference type="PIRSF" id="PIRSF001438">
    <property type="entry name" value="4pyrrol_synth_OHMeBilane_synth"/>
    <property type="match status" value="1"/>
</dbReference>
<dbReference type="PRINTS" id="PR00151">
    <property type="entry name" value="PORPHBDMNASE"/>
</dbReference>
<dbReference type="SUPFAM" id="SSF53850">
    <property type="entry name" value="Periplasmic binding protein-like II"/>
    <property type="match status" value="1"/>
</dbReference>
<dbReference type="SUPFAM" id="SSF54782">
    <property type="entry name" value="Porphobilinogen deaminase (hydroxymethylbilane synthase), C-terminal domain"/>
    <property type="match status" value="1"/>
</dbReference>
<dbReference type="PROSITE" id="PS00533">
    <property type="entry name" value="PORPHOBILINOGEN_DEAM"/>
    <property type="match status" value="1"/>
</dbReference>
<comment type="function">
    <text evidence="1">Tetrapolymerization of the monopyrrole PBG into the hydroxymethylbilane pre-uroporphyrinogen in several discrete steps.</text>
</comment>
<comment type="catalytic activity">
    <reaction evidence="1">
        <text>4 porphobilinogen + H2O = hydroxymethylbilane + 4 NH4(+)</text>
        <dbReference type="Rhea" id="RHEA:13185"/>
        <dbReference type="ChEBI" id="CHEBI:15377"/>
        <dbReference type="ChEBI" id="CHEBI:28938"/>
        <dbReference type="ChEBI" id="CHEBI:57845"/>
        <dbReference type="ChEBI" id="CHEBI:58126"/>
        <dbReference type="EC" id="2.5.1.61"/>
    </reaction>
</comment>
<comment type="cofactor">
    <cofactor evidence="1">
        <name>dipyrromethane</name>
        <dbReference type="ChEBI" id="CHEBI:60342"/>
    </cofactor>
    <text evidence="1">Binds 1 dipyrromethane group covalently.</text>
</comment>
<comment type="pathway">
    <text evidence="1">Porphyrin-containing compound metabolism; protoporphyrin-IX biosynthesis; coproporphyrinogen-III from 5-aminolevulinate: step 2/4.</text>
</comment>
<comment type="subunit">
    <text evidence="1">Monomer.</text>
</comment>
<comment type="miscellaneous">
    <text evidence="1">The porphobilinogen subunits are added to the dipyrromethane group.</text>
</comment>
<comment type="similarity">
    <text evidence="1">Belongs to the HMBS family.</text>
</comment>
<organism>
    <name type="scientific">Burkholderia thailandensis (strain ATCC 700388 / DSM 13276 / CCUG 48851 / CIP 106301 / E264)</name>
    <dbReference type="NCBI Taxonomy" id="271848"/>
    <lineage>
        <taxon>Bacteria</taxon>
        <taxon>Pseudomonadati</taxon>
        <taxon>Pseudomonadota</taxon>
        <taxon>Betaproteobacteria</taxon>
        <taxon>Burkholderiales</taxon>
        <taxon>Burkholderiaceae</taxon>
        <taxon>Burkholderia</taxon>
        <taxon>pseudomallei group</taxon>
    </lineage>
</organism>
<evidence type="ECO:0000255" key="1">
    <source>
        <dbReference type="HAMAP-Rule" id="MF_00260"/>
    </source>
</evidence>
<keyword id="KW-0627">Porphyrin biosynthesis</keyword>
<keyword id="KW-0808">Transferase</keyword>
<accession>Q2T071</accession>
<proteinExistence type="inferred from homology"/>
<name>HEM3_BURTA</name>
<feature type="chain" id="PRO_0000304221" description="Porphobilinogen deaminase">
    <location>
        <begin position="1"/>
        <end position="329"/>
    </location>
</feature>
<feature type="modified residue" description="S-(dipyrrolylmethanemethyl)cysteine" evidence="1">
    <location>
        <position position="250"/>
    </location>
</feature>
<reference key="1">
    <citation type="journal article" date="2005" name="BMC Genomics">
        <title>Bacterial genome adaptation to niches: divergence of the potential virulence genes in three Burkholderia species of different survival strategies.</title>
        <authorList>
            <person name="Kim H.S."/>
            <person name="Schell M.A."/>
            <person name="Yu Y."/>
            <person name="Ulrich R.L."/>
            <person name="Sarria S.H."/>
            <person name="Nierman W.C."/>
            <person name="DeShazer D."/>
        </authorList>
    </citation>
    <scope>NUCLEOTIDE SEQUENCE [LARGE SCALE GENOMIC DNA]</scope>
    <source>
        <strain>ATCC 700388 / DSM 13276 / CCUG 48851 / CIP 106301 / E264</strain>
    </source>
</reference>
<sequence>MNSETLPAELPATLTIASRESRLAMWQAEHVRDALRKLYPACDVKILGMTTRGDQILDRTLSKVGGKGLFVKELESALADGRADLAVHSLKDVPMELPAGFALAAVMSREDPRDAFVSNDYASLDALPAGAVVGTSSLRREAMLRARYPRLDVRPLRGNLDTRLAKLDRGDYAAIILAAAGLKRLGLAARIRALLDVEDSLPAAGQGALGIEIAAGRADVAAWLAPLHDHATALAVEAERAVSRALGGSCEVPLAAHAVWRGDELHLTGSVSTTDGARVLAARAQSRAATAADALALGRAVSDELERQGARAIVDALVAASAQAQKGGA</sequence>
<protein>
    <recommendedName>
        <fullName evidence="1">Porphobilinogen deaminase</fullName>
        <shortName evidence="1">PBG</shortName>
        <ecNumber evidence="1">2.5.1.61</ecNumber>
    </recommendedName>
    <alternativeName>
        <fullName evidence="1">Hydroxymethylbilane synthase</fullName>
        <shortName evidence="1">HMBS</shortName>
    </alternativeName>
    <alternativeName>
        <fullName evidence="1">Pre-uroporphyrinogen synthase</fullName>
    </alternativeName>
</protein>
<gene>
    <name evidence="1" type="primary">hemC</name>
    <name type="ordered locus">BTH_I0872</name>
</gene>